<reference key="1">
    <citation type="submission" date="2004-05" db="EMBL/GenBank/DDBJ databases">
        <authorList>
            <person name="Tessier L.H."/>
        </authorList>
    </citation>
    <scope>NUCLEOTIDE SEQUENCE</scope>
</reference>
<reference key="2">
    <citation type="submission" date="1998-02" db="EMBL/GenBank/DDBJ databases">
        <title>Porcine ADCYAP1 gene, partial genomic sequence.</title>
        <authorList>
            <person name="Larsen N.J."/>
            <person name="Rothschild M.F."/>
        </authorList>
    </citation>
    <scope>NUCLEOTIDE SEQUENCE [GENOMIC DNA] OF 104-176</scope>
</reference>
<reference key="3">
    <citation type="journal article" date="1992" name="Regul. Pept.">
        <title>Identification of porcine pituitary adenylate cyclase activating polypeptide with 27 residues in the hypothalamic extracts.</title>
        <authorList>
            <person name="Miyata A."/>
            <person name="Jiang L."/>
            <person name="Oka S."/>
            <person name="Yoshihara T."/>
            <person name="Arimura A."/>
        </authorList>
    </citation>
    <scope>PROTEIN SEQUENCE OF 132-158</scope>
    <scope>AMIDATION AT LEU-158</scope>
    <source>
        <tissue>Hypothalamus</tissue>
    </source>
</reference>
<protein>
    <recommendedName>
        <fullName>Pituitary adenylate cyclase-activating polypeptide</fullName>
        <shortName>PACAP</shortName>
    </recommendedName>
    <component>
        <recommendedName>
            <fullName>PACAP-related peptide</fullName>
        </recommendedName>
        <alternativeName>
            <fullName>PRP-48</fullName>
        </alternativeName>
    </component>
    <component>
        <recommendedName>
            <fullName>Pituitary adenylate cyclase-activating polypeptide 27</fullName>
            <shortName>PACAP-27</shortName>
            <shortName>PACAP27</shortName>
        </recommendedName>
    </component>
    <component>
        <recommendedName>
            <fullName>Pituitary adenylate cyclase-activating polypeptide 38</fullName>
            <shortName>PACAP-38</shortName>
            <shortName>PACAP38</shortName>
        </recommendedName>
    </component>
</protein>
<evidence type="ECO:0000250" key="1">
    <source>
        <dbReference type="UniProtKB" id="O70176"/>
    </source>
</evidence>
<evidence type="ECO:0000250" key="2">
    <source>
        <dbReference type="UniProtKB" id="P13589"/>
    </source>
</evidence>
<evidence type="ECO:0000250" key="3">
    <source>
        <dbReference type="UniProtKB" id="P18509"/>
    </source>
</evidence>
<evidence type="ECO:0000255" key="4"/>
<evidence type="ECO:0000269" key="5">
    <source ref="3"/>
</evidence>
<evidence type="ECO:0000305" key="6"/>
<name>PACA_PIG</name>
<proteinExistence type="evidence at protein level"/>
<feature type="signal peptide" evidence="4">
    <location>
        <begin position="1"/>
        <end position="24"/>
    </location>
</feature>
<feature type="propeptide" id="PRO_0000011496">
    <location>
        <begin position="25"/>
        <end position="80"/>
    </location>
</feature>
<feature type="peptide" id="PRO_0000011497" description="PACAP-related peptide">
    <location>
        <begin position="82"/>
        <end position="129"/>
    </location>
</feature>
<feature type="peptide" id="PRO_0000011498" description="Pituitary adenylate cyclase-activating polypeptide 38">
    <location>
        <begin position="132"/>
        <end position="169"/>
    </location>
</feature>
<feature type="peptide" id="PRO_0000011499" description="Pituitary adenylate cyclase-activating polypeptide 27">
    <location>
        <begin position="132"/>
        <end position="158"/>
    </location>
</feature>
<feature type="propeptide" id="PRO_0000011500">
    <location>
        <begin position="173"/>
        <end position="176"/>
    </location>
</feature>
<feature type="region of interest" description="Important for receptor binding" evidence="3">
    <location>
        <begin position="150"/>
        <end position="158"/>
    </location>
</feature>
<feature type="modified residue" description="Leucine amide" evidence="5">
    <location>
        <position position="158"/>
    </location>
</feature>
<feature type="modified residue" description="Lysine amide" evidence="3">
    <location>
        <position position="169"/>
    </location>
</feature>
<feature type="sequence conflict" description="In Ref. 2; AAD12780." evidence="6" ref="2">
    <original>Y</original>
    <variation>I</variation>
    <location>
        <position position="104"/>
    </location>
</feature>
<comment type="function">
    <text evidence="1 2 3">PACAP is a neuropeptide involved in diverse array of physiological processes through activating the PACAP subfamily of class B1 G protein-coupled receptors: VIP receptor 1 (VIPR1), VIP receptor 2 (VIPR2), and PACAP type I receptor (ADCYAP1R1). Exerts neuroprotective and general cytoprotective effects due to anti-apoptotic, anti-inflammatory, and antioxidant actions. Promotes neuron projection development through the RAPGEF2/Rap1/B-Raf/ERK pathway (By similarity). In chromaffin cells, induces long-lasting increase of intracellular calcium concentrations and neuroendocrine secretion (By similarity). Involved in the control of glucose homeostasis, induces insulin secretion by pancreatic beta cells (By similarity). PACAP exists in two bioactive forms from proteolysis of the same precursor protein, PACAP27 and PACAP38, which differ by eleven amino acid residues in the C-terminus (By similarity).</text>
</comment>
<comment type="subcellular location">
    <subcellularLocation>
        <location>Secreted</location>
    </subcellularLocation>
</comment>
<comment type="similarity">
    <text evidence="6">Belongs to the glucagon family.</text>
</comment>
<organism>
    <name type="scientific">Sus scrofa</name>
    <name type="common">Pig</name>
    <dbReference type="NCBI Taxonomy" id="9823"/>
    <lineage>
        <taxon>Eukaryota</taxon>
        <taxon>Metazoa</taxon>
        <taxon>Chordata</taxon>
        <taxon>Craniata</taxon>
        <taxon>Vertebrata</taxon>
        <taxon>Euteleostomi</taxon>
        <taxon>Mammalia</taxon>
        <taxon>Eutheria</taxon>
        <taxon>Laurasiatheria</taxon>
        <taxon>Artiodactyla</taxon>
        <taxon>Suina</taxon>
        <taxon>Suidae</taxon>
        <taxon>Sus</taxon>
    </lineage>
</organism>
<dbReference type="EMBL" id="AJ715856">
    <property type="protein sequence ID" value="CAG29646.1"/>
    <property type="molecule type" value="mRNA"/>
</dbReference>
<dbReference type="EMBL" id="AH007323">
    <property type="protein sequence ID" value="AAD12780.1"/>
    <property type="molecule type" value="Genomic_DNA"/>
</dbReference>
<dbReference type="PIR" id="A61071">
    <property type="entry name" value="A61071"/>
</dbReference>
<dbReference type="RefSeq" id="NP_001001544.1">
    <property type="nucleotide sequence ID" value="NM_001001544.1"/>
</dbReference>
<dbReference type="SMR" id="P41535"/>
<dbReference type="FunCoup" id="P41535">
    <property type="interactions" value="346"/>
</dbReference>
<dbReference type="STRING" id="9823.ENSSSCP00000054892"/>
<dbReference type="PaxDb" id="9823-ENSSSCP00000004005"/>
<dbReference type="GeneID" id="414283"/>
<dbReference type="KEGG" id="ssc:414283"/>
<dbReference type="CTD" id="116"/>
<dbReference type="eggNOG" id="ENOG502QSGB">
    <property type="taxonomic scope" value="Eukaryota"/>
</dbReference>
<dbReference type="InParanoid" id="P41535"/>
<dbReference type="OrthoDB" id="9875627at2759"/>
<dbReference type="Proteomes" id="UP000008227">
    <property type="component" value="Unplaced"/>
</dbReference>
<dbReference type="Proteomes" id="UP000314985">
    <property type="component" value="Unplaced"/>
</dbReference>
<dbReference type="Proteomes" id="UP000694570">
    <property type="component" value="Unplaced"/>
</dbReference>
<dbReference type="Proteomes" id="UP000694571">
    <property type="component" value="Unplaced"/>
</dbReference>
<dbReference type="Proteomes" id="UP000694720">
    <property type="component" value="Unplaced"/>
</dbReference>
<dbReference type="Proteomes" id="UP000694722">
    <property type="component" value="Unplaced"/>
</dbReference>
<dbReference type="Proteomes" id="UP000694723">
    <property type="component" value="Unplaced"/>
</dbReference>
<dbReference type="Proteomes" id="UP000694724">
    <property type="component" value="Unplaced"/>
</dbReference>
<dbReference type="Proteomes" id="UP000694725">
    <property type="component" value="Unplaced"/>
</dbReference>
<dbReference type="Proteomes" id="UP000694726">
    <property type="component" value="Unplaced"/>
</dbReference>
<dbReference type="Proteomes" id="UP000694727">
    <property type="component" value="Unplaced"/>
</dbReference>
<dbReference type="Proteomes" id="UP000694728">
    <property type="component" value="Unplaced"/>
</dbReference>
<dbReference type="GO" id="GO:0005576">
    <property type="term" value="C:extracellular region"/>
    <property type="evidence" value="ECO:0007669"/>
    <property type="project" value="UniProtKB-SubCell"/>
</dbReference>
<dbReference type="GO" id="GO:0043005">
    <property type="term" value="C:neuron projection"/>
    <property type="evidence" value="ECO:0000318"/>
    <property type="project" value="GO_Central"/>
</dbReference>
<dbReference type="GO" id="GO:0043204">
    <property type="term" value="C:perikaryon"/>
    <property type="evidence" value="ECO:0000318"/>
    <property type="project" value="GO_Central"/>
</dbReference>
<dbReference type="GO" id="GO:0005184">
    <property type="term" value="F:neuropeptide hormone activity"/>
    <property type="evidence" value="ECO:0000250"/>
    <property type="project" value="UniProtKB"/>
</dbReference>
<dbReference type="GO" id="GO:0051428">
    <property type="term" value="F:peptide hormone receptor binding"/>
    <property type="evidence" value="ECO:0000250"/>
    <property type="project" value="UniProtKB"/>
</dbReference>
<dbReference type="GO" id="GO:0016521">
    <property type="term" value="F:pituitary adenylate cyclase activating polypeptide activity"/>
    <property type="evidence" value="ECO:0000314"/>
    <property type="project" value="BHF-UCL"/>
</dbReference>
<dbReference type="GO" id="GO:0031891">
    <property type="term" value="F:type 1 vasoactive intestinal polypeptide receptor binding"/>
    <property type="evidence" value="ECO:0000250"/>
    <property type="project" value="UniProtKB"/>
</dbReference>
<dbReference type="GO" id="GO:0031892">
    <property type="term" value="F:type 2 vasoactive intestinal polypeptide receptor binding"/>
    <property type="evidence" value="ECO:0000250"/>
    <property type="project" value="UniProtKB"/>
</dbReference>
<dbReference type="GO" id="GO:0007189">
    <property type="term" value="P:adenylate cyclase-activating G protein-coupled receptor signaling pathway"/>
    <property type="evidence" value="ECO:0000314"/>
    <property type="project" value="BHF-UCL"/>
</dbReference>
<dbReference type="GO" id="GO:0007188">
    <property type="term" value="P:adenylate cyclase-modulating G protein-coupled receptor signaling pathway"/>
    <property type="evidence" value="ECO:0000250"/>
    <property type="project" value="UniProtKB"/>
</dbReference>
<dbReference type="GO" id="GO:0030073">
    <property type="term" value="P:insulin secretion"/>
    <property type="evidence" value="ECO:0000250"/>
    <property type="project" value="UniProtKB"/>
</dbReference>
<dbReference type="GO" id="GO:0031175">
    <property type="term" value="P:neuron projection development"/>
    <property type="evidence" value="ECO:0000250"/>
    <property type="project" value="UniProtKB"/>
</dbReference>
<dbReference type="GO" id="GO:0007218">
    <property type="term" value="P:neuropeptide signaling pathway"/>
    <property type="evidence" value="ECO:0000250"/>
    <property type="project" value="UniProtKB"/>
</dbReference>
<dbReference type="GO" id="GO:0007204">
    <property type="term" value="P:positive regulation of cytosolic calcium ion concentration"/>
    <property type="evidence" value="ECO:0000250"/>
    <property type="project" value="UniProtKB"/>
</dbReference>
<dbReference type="GO" id="GO:0070374">
    <property type="term" value="P:positive regulation of ERK1 and ERK2 cascade"/>
    <property type="evidence" value="ECO:0000250"/>
    <property type="project" value="UniProtKB"/>
</dbReference>
<dbReference type="GO" id="GO:0010628">
    <property type="term" value="P:positive regulation of gene expression"/>
    <property type="evidence" value="ECO:0000250"/>
    <property type="project" value="UniProtKB"/>
</dbReference>
<dbReference type="GO" id="GO:0060124">
    <property type="term" value="P:positive regulation of growth hormone secretion"/>
    <property type="evidence" value="ECO:0000250"/>
    <property type="project" value="UniProtKB"/>
</dbReference>
<dbReference type="GO" id="GO:0043547">
    <property type="term" value="P:positive regulation of GTPase activity"/>
    <property type="evidence" value="ECO:0000250"/>
    <property type="project" value="UniProtKB"/>
</dbReference>
<dbReference type="GO" id="GO:0045860">
    <property type="term" value="P:positive regulation of protein kinase activity"/>
    <property type="evidence" value="ECO:0000250"/>
    <property type="project" value="UniProtKB"/>
</dbReference>
<dbReference type="GO" id="GO:0045944">
    <property type="term" value="P:positive regulation of transcription by RNA polymerase II"/>
    <property type="evidence" value="ECO:0000250"/>
    <property type="project" value="UniProtKB"/>
</dbReference>
<dbReference type="GO" id="GO:0008277">
    <property type="term" value="P:regulation of G protein-coupled receptor signaling pathway"/>
    <property type="evidence" value="ECO:0000250"/>
    <property type="project" value="UniProtKB"/>
</dbReference>
<dbReference type="GO" id="GO:0032880">
    <property type="term" value="P:regulation of protein localization"/>
    <property type="evidence" value="ECO:0000314"/>
    <property type="project" value="BHF-UCL"/>
</dbReference>
<dbReference type="Gene3D" id="6.10.250.590">
    <property type="match status" value="1"/>
</dbReference>
<dbReference type="InterPro" id="IPR000532">
    <property type="entry name" value="Glucagon_GIP_secretin_VIP"/>
</dbReference>
<dbReference type="InterPro" id="IPR046963">
    <property type="entry name" value="VIP/GHRH-like"/>
</dbReference>
<dbReference type="PANTHER" id="PTHR11213">
    <property type="entry name" value="GLUCAGON-FAMILY NEUROPEPTIDE"/>
    <property type="match status" value="1"/>
</dbReference>
<dbReference type="PANTHER" id="PTHR11213:SF1">
    <property type="entry name" value="PITUITARY ADENYLATE CYCLASE-ACTIVATING POLYPEPTIDE"/>
    <property type="match status" value="1"/>
</dbReference>
<dbReference type="Pfam" id="PF00123">
    <property type="entry name" value="Hormone_2"/>
    <property type="match status" value="2"/>
</dbReference>
<dbReference type="PRINTS" id="PR00275">
    <property type="entry name" value="GLUCAGON"/>
</dbReference>
<dbReference type="SMART" id="SM00070">
    <property type="entry name" value="GLUCA"/>
    <property type="match status" value="2"/>
</dbReference>
<dbReference type="PROSITE" id="PS00260">
    <property type="entry name" value="GLUCAGON"/>
    <property type="match status" value="1"/>
</dbReference>
<accession>P41535</accession>
<accession>O97570</accession>
<accession>Q6KBX3</accession>
<sequence length="176" mass="19523">MTMCSGARLALLVYGIIMHSSVYCSPAAAGLRFPGIRPEDEAYDEDGNPLQDFYDSDPPGVGGPASTLRDAYALYYPAEERDVAHGILNKAYRKVLDQLSARKYLQTLMAKSVGGNLDGGAEDDSEPLSKRHSDGIFTDSYSRYRKQMAVKKYLAAVLGKRYKQRVKNKGRRIAYL</sequence>
<keyword id="KW-0027">Amidation</keyword>
<keyword id="KW-0165">Cleavage on pair of basic residues</keyword>
<keyword id="KW-0903">Direct protein sequencing</keyword>
<keyword id="KW-0372">Hormone</keyword>
<keyword id="KW-0524">Neurogenesis</keyword>
<keyword id="KW-1185">Reference proteome</keyword>
<keyword id="KW-0964">Secreted</keyword>
<keyword id="KW-0732">Signal</keyword>
<gene>
    <name type="primary">ADCYAP1</name>
</gene>